<sequence length="219" mass="24399">MSRMAFDRQKIVEAVKEAKARAKPRNFTQSVEVAVNLKDIDLKRPENRFKLEVVLPHGRGKDVKIAVIADGAVAEAARRLGLDVISSAELEEIAKSPRQARKLAKKYDFFIAEAPLMPKIGRYLGRYLGPRNKMPVVVPPTMTNIEPIVEKLKKTVRIQLKDNPVVHAPVGTEKMSDEQLAENIEAVLNAIIGKLERGENQIRSVYVKTTMGPAVRVEG</sequence>
<proteinExistence type="inferred from homology"/>
<keyword id="KW-0678">Repressor</keyword>
<keyword id="KW-0687">Ribonucleoprotein</keyword>
<keyword id="KW-0689">Ribosomal protein</keyword>
<keyword id="KW-0694">RNA-binding</keyword>
<keyword id="KW-0699">rRNA-binding</keyword>
<keyword id="KW-0810">Translation regulation</keyword>
<keyword id="KW-0820">tRNA-binding</keyword>
<gene>
    <name evidence="1" type="primary">rpl1</name>
    <name type="ordered locus">PH2000</name>
</gene>
<dbReference type="EMBL" id="BA000001">
    <property type="protein sequence ID" value="BAA31942.1"/>
    <property type="molecule type" value="Genomic_DNA"/>
</dbReference>
<dbReference type="PIR" id="D71217">
    <property type="entry name" value="D71217"/>
</dbReference>
<dbReference type="SMR" id="O57782"/>
<dbReference type="STRING" id="70601.gene:9376904"/>
<dbReference type="EnsemblBacteria" id="BAA31942">
    <property type="protein sequence ID" value="BAA31942"/>
    <property type="gene ID" value="BAA31942"/>
</dbReference>
<dbReference type="KEGG" id="pho:PH2000"/>
<dbReference type="eggNOG" id="arCOG04289">
    <property type="taxonomic scope" value="Archaea"/>
</dbReference>
<dbReference type="Proteomes" id="UP000000752">
    <property type="component" value="Chromosome"/>
</dbReference>
<dbReference type="GO" id="GO:0015934">
    <property type="term" value="C:large ribosomal subunit"/>
    <property type="evidence" value="ECO:0007669"/>
    <property type="project" value="InterPro"/>
</dbReference>
<dbReference type="GO" id="GO:0019843">
    <property type="term" value="F:rRNA binding"/>
    <property type="evidence" value="ECO:0007669"/>
    <property type="project" value="UniProtKB-UniRule"/>
</dbReference>
<dbReference type="GO" id="GO:0003735">
    <property type="term" value="F:structural constituent of ribosome"/>
    <property type="evidence" value="ECO:0007669"/>
    <property type="project" value="InterPro"/>
</dbReference>
<dbReference type="GO" id="GO:0000049">
    <property type="term" value="F:tRNA binding"/>
    <property type="evidence" value="ECO:0007669"/>
    <property type="project" value="UniProtKB-KW"/>
</dbReference>
<dbReference type="GO" id="GO:0006417">
    <property type="term" value="P:regulation of translation"/>
    <property type="evidence" value="ECO:0007669"/>
    <property type="project" value="UniProtKB-KW"/>
</dbReference>
<dbReference type="GO" id="GO:0006412">
    <property type="term" value="P:translation"/>
    <property type="evidence" value="ECO:0007669"/>
    <property type="project" value="UniProtKB-UniRule"/>
</dbReference>
<dbReference type="CDD" id="cd00403">
    <property type="entry name" value="Ribosomal_L1"/>
    <property type="match status" value="1"/>
</dbReference>
<dbReference type="FunFam" id="3.40.50.790:FF:000005">
    <property type="entry name" value="50S ribosomal protein L1"/>
    <property type="match status" value="1"/>
</dbReference>
<dbReference type="Gene3D" id="3.30.190.20">
    <property type="match status" value="1"/>
</dbReference>
<dbReference type="Gene3D" id="3.40.50.790">
    <property type="match status" value="1"/>
</dbReference>
<dbReference type="HAMAP" id="MF_01318_A">
    <property type="entry name" value="Ribosomal_uL1_A"/>
    <property type="match status" value="1"/>
</dbReference>
<dbReference type="InterPro" id="IPR002143">
    <property type="entry name" value="Ribosomal_uL1"/>
</dbReference>
<dbReference type="InterPro" id="IPR023674">
    <property type="entry name" value="Ribosomal_uL1-like"/>
</dbReference>
<dbReference type="InterPro" id="IPR028364">
    <property type="entry name" value="Ribosomal_uL1/biogenesis"/>
</dbReference>
<dbReference type="InterPro" id="IPR016095">
    <property type="entry name" value="Ribosomal_uL1_3-a/b-sand"/>
</dbReference>
<dbReference type="InterPro" id="IPR023669">
    <property type="entry name" value="Ribosomal_uL1_arc"/>
</dbReference>
<dbReference type="InterPro" id="IPR023673">
    <property type="entry name" value="Ribosomal_uL1_CS"/>
</dbReference>
<dbReference type="NCBIfam" id="NF003244">
    <property type="entry name" value="PRK04203.1"/>
    <property type="match status" value="1"/>
</dbReference>
<dbReference type="PANTHER" id="PTHR36427">
    <property type="entry name" value="54S RIBOSOMAL PROTEIN L1, MITOCHONDRIAL"/>
    <property type="match status" value="1"/>
</dbReference>
<dbReference type="PANTHER" id="PTHR36427:SF3">
    <property type="entry name" value="LARGE RIBOSOMAL SUBUNIT PROTEIN UL1M"/>
    <property type="match status" value="1"/>
</dbReference>
<dbReference type="Pfam" id="PF00687">
    <property type="entry name" value="Ribosomal_L1"/>
    <property type="match status" value="1"/>
</dbReference>
<dbReference type="PIRSF" id="PIRSF002155">
    <property type="entry name" value="Ribosomal_L1"/>
    <property type="match status" value="1"/>
</dbReference>
<dbReference type="SUPFAM" id="SSF56808">
    <property type="entry name" value="Ribosomal protein L1"/>
    <property type="match status" value="1"/>
</dbReference>
<dbReference type="PROSITE" id="PS01199">
    <property type="entry name" value="RIBOSOMAL_L1"/>
    <property type="match status" value="1"/>
</dbReference>
<protein>
    <recommendedName>
        <fullName evidence="1">Large ribosomal subunit protein uL1</fullName>
    </recommendedName>
    <alternativeName>
        <fullName evidence="2">50S ribosomal protein L1</fullName>
    </alternativeName>
</protein>
<organism>
    <name type="scientific">Pyrococcus horikoshii (strain ATCC 700860 / DSM 12428 / JCM 9974 / NBRC 100139 / OT-3)</name>
    <dbReference type="NCBI Taxonomy" id="70601"/>
    <lineage>
        <taxon>Archaea</taxon>
        <taxon>Methanobacteriati</taxon>
        <taxon>Methanobacteriota</taxon>
        <taxon>Thermococci</taxon>
        <taxon>Thermococcales</taxon>
        <taxon>Thermococcaceae</taxon>
        <taxon>Pyrococcus</taxon>
    </lineage>
</organism>
<evidence type="ECO:0000255" key="1">
    <source>
        <dbReference type="HAMAP-Rule" id="MF_01318"/>
    </source>
</evidence>
<evidence type="ECO:0000305" key="2"/>
<name>RL1_PYRHO</name>
<reference key="1">
    <citation type="journal article" date="1998" name="DNA Res.">
        <title>Complete sequence and gene organization of the genome of a hyper-thermophilic archaebacterium, Pyrococcus horikoshii OT3.</title>
        <authorList>
            <person name="Kawarabayasi Y."/>
            <person name="Sawada M."/>
            <person name="Horikawa H."/>
            <person name="Haikawa Y."/>
            <person name="Hino Y."/>
            <person name="Yamamoto S."/>
            <person name="Sekine M."/>
            <person name="Baba S."/>
            <person name="Kosugi H."/>
            <person name="Hosoyama A."/>
            <person name="Nagai Y."/>
            <person name="Sakai M."/>
            <person name="Ogura K."/>
            <person name="Otsuka R."/>
            <person name="Nakazawa H."/>
            <person name="Takamiya M."/>
            <person name="Ohfuku Y."/>
            <person name="Funahashi T."/>
            <person name="Tanaka T."/>
            <person name="Kudoh Y."/>
            <person name="Yamazaki J."/>
            <person name="Kushida N."/>
            <person name="Oguchi A."/>
            <person name="Aoki K."/>
            <person name="Yoshizawa T."/>
            <person name="Nakamura Y."/>
            <person name="Robb F.T."/>
            <person name="Horikoshi K."/>
            <person name="Masuchi Y."/>
            <person name="Shizuya H."/>
            <person name="Kikuchi H."/>
        </authorList>
    </citation>
    <scope>NUCLEOTIDE SEQUENCE [LARGE SCALE GENOMIC DNA]</scope>
    <source>
        <strain>ATCC 700860 / DSM 12428 / JCM 9974 / NBRC 100139 / OT-3</strain>
    </source>
</reference>
<accession>O57782</accession>
<comment type="function">
    <text evidence="1">Binds directly to 23S rRNA. Probably involved in E site tRNA release.</text>
</comment>
<comment type="function">
    <text evidence="1">Protein L1 is also a translational repressor protein, it controls the translation of its operon by binding to its mRNA.</text>
</comment>
<comment type="subunit">
    <text evidence="1">Part of the 50S ribosomal subunit.</text>
</comment>
<comment type="similarity">
    <text evidence="1">Belongs to the universal ribosomal protein uL1 family.</text>
</comment>
<feature type="chain" id="PRO_0000125810" description="Large ribosomal subunit protein uL1">
    <location>
        <begin position="1"/>
        <end position="219"/>
    </location>
</feature>